<feature type="chain" id="PRO_0000382305" description="Glutamate-1-semialdehyde 2,1-aminomutase">
    <location>
        <begin position="1"/>
        <end position="425"/>
    </location>
</feature>
<feature type="modified residue" description="N6-(pyridoxal phosphate)lysine" evidence="1">
    <location>
        <position position="265"/>
    </location>
</feature>
<dbReference type="EC" id="5.4.3.8" evidence="1"/>
<dbReference type="EMBL" id="CP001322">
    <property type="protein sequence ID" value="ACL04545.1"/>
    <property type="molecule type" value="Genomic_DNA"/>
</dbReference>
<dbReference type="RefSeq" id="WP_015947615.1">
    <property type="nucleotide sequence ID" value="NC_011768.1"/>
</dbReference>
<dbReference type="SMR" id="B8FBA1"/>
<dbReference type="KEGG" id="dal:Dalk_2855"/>
<dbReference type="eggNOG" id="COG0001">
    <property type="taxonomic scope" value="Bacteria"/>
</dbReference>
<dbReference type="HOGENOM" id="CLU_016922_1_5_7"/>
<dbReference type="UniPathway" id="UPA00251">
    <property type="reaction ID" value="UER00317"/>
</dbReference>
<dbReference type="Proteomes" id="UP000000739">
    <property type="component" value="Chromosome"/>
</dbReference>
<dbReference type="GO" id="GO:0005737">
    <property type="term" value="C:cytoplasm"/>
    <property type="evidence" value="ECO:0007669"/>
    <property type="project" value="UniProtKB-SubCell"/>
</dbReference>
<dbReference type="GO" id="GO:0042286">
    <property type="term" value="F:glutamate-1-semialdehyde 2,1-aminomutase activity"/>
    <property type="evidence" value="ECO:0007669"/>
    <property type="project" value="UniProtKB-UniRule"/>
</dbReference>
<dbReference type="GO" id="GO:0030170">
    <property type="term" value="F:pyridoxal phosphate binding"/>
    <property type="evidence" value="ECO:0007669"/>
    <property type="project" value="InterPro"/>
</dbReference>
<dbReference type="GO" id="GO:0008483">
    <property type="term" value="F:transaminase activity"/>
    <property type="evidence" value="ECO:0007669"/>
    <property type="project" value="InterPro"/>
</dbReference>
<dbReference type="GO" id="GO:0006782">
    <property type="term" value="P:protoporphyrinogen IX biosynthetic process"/>
    <property type="evidence" value="ECO:0007669"/>
    <property type="project" value="UniProtKB-UniRule"/>
</dbReference>
<dbReference type="CDD" id="cd00610">
    <property type="entry name" value="OAT_like"/>
    <property type="match status" value="1"/>
</dbReference>
<dbReference type="FunFam" id="3.40.640.10:FF:000021">
    <property type="entry name" value="Glutamate-1-semialdehyde 2,1-aminomutase"/>
    <property type="match status" value="1"/>
</dbReference>
<dbReference type="Gene3D" id="3.90.1150.10">
    <property type="entry name" value="Aspartate Aminotransferase, domain 1"/>
    <property type="match status" value="1"/>
</dbReference>
<dbReference type="Gene3D" id="3.40.640.10">
    <property type="entry name" value="Type I PLP-dependent aspartate aminotransferase-like (Major domain)"/>
    <property type="match status" value="1"/>
</dbReference>
<dbReference type="HAMAP" id="MF_00375">
    <property type="entry name" value="HemL_aminotrans_3"/>
    <property type="match status" value="1"/>
</dbReference>
<dbReference type="InterPro" id="IPR004639">
    <property type="entry name" value="4pyrrol_synth_GluAld_NH2Trfase"/>
</dbReference>
<dbReference type="InterPro" id="IPR005814">
    <property type="entry name" value="Aminotrans_3"/>
</dbReference>
<dbReference type="InterPro" id="IPR049704">
    <property type="entry name" value="Aminotrans_3_PPA_site"/>
</dbReference>
<dbReference type="InterPro" id="IPR015424">
    <property type="entry name" value="PyrdxlP-dep_Trfase"/>
</dbReference>
<dbReference type="InterPro" id="IPR015421">
    <property type="entry name" value="PyrdxlP-dep_Trfase_major"/>
</dbReference>
<dbReference type="InterPro" id="IPR015422">
    <property type="entry name" value="PyrdxlP-dep_Trfase_small"/>
</dbReference>
<dbReference type="NCBIfam" id="TIGR00713">
    <property type="entry name" value="hemL"/>
    <property type="match status" value="1"/>
</dbReference>
<dbReference type="NCBIfam" id="NF000818">
    <property type="entry name" value="PRK00062.1"/>
    <property type="match status" value="1"/>
</dbReference>
<dbReference type="PANTHER" id="PTHR43713">
    <property type="entry name" value="GLUTAMATE-1-SEMIALDEHYDE 2,1-AMINOMUTASE"/>
    <property type="match status" value="1"/>
</dbReference>
<dbReference type="PANTHER" id="PTHR43713:SF3">
    <property type="entry name" value="GLUTAMATE-1-SEMIALDEHYDE 2,1-AMINOMUTASE 1, CHLOROPLASTIC-RELATED"/>
    <property type="match status" value="1"/>
</dbReference>
<dbReference type="Pfam" id="PF00202">
    <property type="entry name" value="Aminotran_3"/>
    <property type="match status" value="1"/>
</dbReference>
<dbReference type="SUPFAM" id="SSF53383">
    <property type="entry name" value="PLP-dependent transferases"/>
    <property type="match status" value="1"/>
</dbReference>
<dbReference type="PROSITE" id="PS00600">
    <property type="entry name" value="AA_TRANSFER_CLASS_3"/>
    <property type="match status" value="1"/>
</dbReference>
<organism>
    <name type="scientific">Desulfatibacillum aliphaticivorans</name>
    <dbReference type="NCBI Taxonomy" id="218208"/>
    <lineage>
        <taxon>Bacteria</taxon>
        <taxon>Pseudomonadati</taxon>
        <taxon>Thermodesulfobacteriota</taxon>
        <taxon>Desulfobacteria</taxon>
        <taxon>Desulfobacterales</taxon>
        <taxon>Desulfatibacillaceae</taxon>
        <taxon>Desulfatibacillum</taxon>
    </lineage>
</organism>
<reference key="1">
    <citation type="journal article" date="2012" name="Environ. Microbiol.">
        <title>The genome sequence of Desulfatibacillum alkenivorans AK-01: a blueprint for anaerobic alkane oxidation.</title>
        <authorList>
            <person name="Callaghan A.V."/>
            <person name="Morris B.E."/>
            <person name="Pereira I.A."/>
            <person name="McInerney M.J."/>
            <person name="Austin R.N."/>
            <person name="Groves J.T."/>
            <person name="Kukor J.J."/>
            <person name="Suflita J.M."/>
            <person name="Young L.Y."/>
            <person name="Zylstra G.J."/>
            <person name="Wawrik B."/>
        </authorList>
    </citation>
    <scope>NUCLEOTIDE SEQUENCE [LARGE SCALE GENOMIC DNA]</scope>
    <source>
        <strain>AK-01</strain>
    </source>
</reference>
<proteinExistence type="inferred from homology"/>
<accession>B8FBA1</accession>
<evidence type="ECO:0000255" key="1">
    <source>
        <dbReference type="HAMAP-Rule" id="MF_00375"/>
    </source>
</evidence>
<protein>
    <recommendedName>
        <fullName evidence="1">Glutamate-1-semialdehyde 2,1-aminomutase</fullName>
        <shortName evidence="1">GSA</shortName>
        <ecNumber evidence="1">5.4.3.8</ecNumber>
    </recommendedName>
    <alternativeName>
        <fullName evidence="1">Glutamate-1-semialdehyde aminotransferase</fullName>
        <shortName evidence="1">GSA-AT</shortName>
    </alternativeName>
</protein>
<gene>
    <name evidence="1" type="primary">hemL</name>
    <name type="ordered locus">Dalk_2855</name>
</gene>
<sequence length="425" mass="44422">MEKSKELFARACKTIPGGVNSPVRACGSVGTDPCFIARGQGSAIFDADGKQYIDYIGSWGPLILGHRHPAVIKAIEAALANGCTFGAPTELEIDLAEAVVNIMPSVEMVRMVNSGTEATMSAIRLARGATGRDGIVKFDGCYHGHGDSLLVAAGSGVATLGIPGSPGVPDKVAESTASLEYNNIEAVKEYCKKKGDRTAAIIVEPVAGNMGVVAPKPEFIQGLREVCDQYGIVLILDEVMTGFRVALGGAQSLYGVTPDLTTMGKVIGGGLPVGAYGGKRSLMEKIAPSGPVYQAGTLSGNPMAMAAGIATLKEISAPGFYEALEKSSQTLADGLKKAAADAGVEAVISRVGSMQTLFFSAGPVENFEDAKKCDLDRFSKFYQGMRAEGVFLPPSQFEAWFVSSAHTEADIEATLKAAEKVLRQL</sequence>
<name>GSA_DESAL</name>
<comment type="catalytic activity">
    <reaction evidence="1">
        <text>(S)-4-amino-5-oxopentanoate = 5-aminolevulinate</text>
        <dbReference type="Rhea" id="RHEA:14265"/>
        <dbReference type="ChEBI" id="CHEBI:57501"/>
        <dbReference type="ChEBI" id="CHEBI:356416"/>
        <dbReference type="EC" id="5.4.3.8"/>
    </reaction>
</comment>
<comment type="cofactor">
    <cofactor evidence="1">
        <name>pyridoxal 5'-phosphate</name>
        <dbReference type="ChEBI" id="CHEBI:597326"/>
    </cofactor>
</comment>
<comment type="pathway">
    <text evidence="1">Porphyrin-containing compound metabolism; protoporphyrin-IX biosynthesis; 5-aminolevulinate from L-glutamyl-tRNA(Glu): step 2/2.</text>
</comment>
<comment type="subunit">
    <text evidence="1">Homodimer.</text>
</comment>
<comment type="subcellular location">
    <subcellularLocation>
        <location evidence="1">Cytoplasm</location>
    </subcellularLocation>
</comment>
<comment type="similarity">
    <text evidence="1">Belongs to the class-III pyridoxal-phosphate-dependent aminotransferase family. HemL subfamily.</text>
</comment>
<keyword id="KW-0963">Cytoplasm</keyword>
<keyword id="KW-0413">Isomerase</keyword>
<keyword id="KW-0627">Porphyrin biosynthesis</keyword>
<keyword id="KW-0663">Pyridoxal phosphate</keyword>
<keyword id="KW-1185">Reference proteome</keyword>